<keyword id="KW-1185">Reference proteome</keyword>
<keyword id="KW-0687">Ribonucleoprotein</keyword>
<keyword id="KW-0689">Ribosomal protein</keyword>
<keyword id="KW-0694">RNA-binding</keyword>
<keyword id="KW-0699">rRNA-binding</keyword>
<protein>
    <recommendedName>
        <fullName evidence="1">Small ribosomal subunit protein uS15</fullName>
    </recommendedName>
    <alternativeName>
        <fullName evidence="2">30S ribosomal protein S15</fullName>
    </alternativeName>
</protein>
<feature type="chain" id="PRO_1000166396" description="Small ribosomal subunit protein uS15">
    <location>
        <begin position="1"/>
        <end position="93"/>
    </location>
</feature>
<name>RS15_ANAMF</name>
<dbReference type="EMBL" id="CP001079">
    <property type="protein sequence ID" value="ACM49254.1"/>
    <property type="molecule type" value="Genomic_DNA"/>
</dbReference>
<dbReference type="RefSeq" id="WP_010264232.1">
    <property type="nucleotide sequence ID" value="NC_012026.1"/>
</dbReference>
<dbReference type="SMR" id="B9KIE2"/>
<dbReference type="STRING" id="320483.AMF_390"/>
<dbReference type="GeneID" id="7397934"/>
<dbReference type="KEGG" id="amf:AMF_390"/>
<dbReference type="PATRIC" id="fig|320483.3.peg.454"/>
<dbReference type="eggNOG" id="COG0184">
    <property type="taxonomic scope" value="Bacteria"/>
</dbReference>
<dbReference type="HOGENOM" id="CLU_148518_0_0_5"/>
<dbReference type="Proteomes" id="UP000007307">
    <property type="component" value="Chromosome"/>
</dbReference>
<dbReference type="GO" id="GO:0022627">
    <property type="term" value="C:cytosolic small ribosomal subunit"/>
    <property type="evidence" value="ECO:0007669"/>
    <property type="project" value="TreeGrafter"/>
</dbReference>
<dbReference type="GO" id="GO:0019843">
    <property type="term" value="F:rRNA binding"/>
    <property type="evidence" value="ECO:0007669"/>
    <property type="project" value="UniProtKB-UniRule"/>
</dbReference>
<dbReference type="GO" id="GO:0003735">
    <property type="term" value="F:structural constituent of ribosome"/>
    <property type="evidence" value="ECO:0007669"/>
    <property type="project" value="InterPro"/>
</dbReference>
<dbReference type="GO" id="GO:0006412">
    <property type="term" value="P:translation"/>
    <property type="evidence" value="ECO:0007669"/>
    <property type="project" value="UniProtKB-UniRule"/>
</dbReference>
<dbReference type="CDD" id="cd00353">
    <property type="entry name" value="Ribosomal_S15p_S13e"/>
    <property type="match status" value="1"/>
</dbReference>
<dbReference type="FunFam" id="1.10.287.10:FF:000002">
    <property type="entry name" value="30S ribosomal protein S15"/>
    <property type="match status" value="1"/>
</dbReference>
<dbReference type="Gene3D" id="1.10.287.10">
    <property type="entry name" value="S15/NS1, RNA-binding"/>
    <property type="match status" value="1"/>
</dbReference>
<dbReference type="HAMAP" id="MF_01343_B">
    <property type="entry name" value="Ribosomal_uS15_B"/>
    <property type="match status" value="1"/>
</dbReference>
<dbReference type="InterPro" id="IPR000589">
    <property type="entry name" value="Ribosomal_uS15"/>
</dbReference>
<dbReference type="InterPro" id="IPR005290">
    <property type="entry name" value="Ribosomal_uS15_bac-type"/>
</dbReference>
<dbReference type="InterPro" id="IPR009068">
    <property type="entry name" value="uS15_NS1_RNA-bd_sf"/>
</dbReference>
<dbReference type="NCBIfam" id="TIGR00952">
    <property type="entry name" value="S15_bact"/>
    <property type="match status" value="1"/>
</dbReference>
<dbReference type="PANTHER" id="PTHR23321">
    <property type="entry name" value="RIBOSOMAL PROTEIN S15, BACTERIAL AND ORGANELLAR"/>
    <property type="match status" value="1"/>
</dbReference>
<dbReference type="PANTHER" id="PTHR23321:SF26">
    <property type="entry name" value="SMALL RIBOSOMAL SUBUNIT PROTEIN US15M"/>
    <property type="match status" value="1"/>
</dbReference>
<dbReference type="Pfam" id="PF00312">
    <property type="entry name" value="Ribosomal_S15"/>
    <property type="match status" value="1"/>
</dbReference>
<dbReference type="SMART" id="SM01387">
    <property type="entry name" value="Ribosomal_S15"/>
    <property type="match status" value="1"/>
</dbReference>
<dbReference type="SUPFAM" id="SSF47060">
    <property type="entry name" value="S15/NS1 RNA-binding domain"/>
    <property type="match status" value="1"/>
</dbReference>
<comment type="function">
    <text evidence="1">One of the primary rRNA binding proteins, it binds directly to 16S rRNA where it helps nucleate assembly of the platform of the 30S subunit by binding and bridging several RNA helices of the 16S rRNA.</text>
</comment>
<comment type="function">
    <text evidence="1">Forms an intersubunit bridge (bridge B4) with the 23S rRNA of the 50S subunit in the ribosome.</text>
</comment>
<comment type="subunit">
    <text evidence="1">Part of the 30S ribosomal subunit. Forms a bridge to the 50S subunit in the 70S ribosome, contacting the 23S rRNA.</text>
</comment>
<comment type="similarity">
    <text evidence="1">Belongs to the universal ribosomal protein uS15 family.</text>
</comment>
<accession>B9KIE2</accession>
<organism>
    <name type="scientific">Anaplasma marginale (strain Florida)</name>
    <dbReference type="NCBI Taxonomy" id="320483"/>
    <lineage>
        <taxon>Bacteria</taxon>
        <taxon>Pseudomonadati</taxon>
        <taxon>Pseudomonadota</taxon>
        <taxon>Alphaproteobacteria</taxon>
        <taxon>Rickettsiales</taxon>
        <taxon>Anaplasmataceae</taxon>
        <taxon>Anaplasma</taxon>
    </lineage>
</organism>
<evidence type="ECO:0000255" key="1">
    <source>
        <dbReference type="HAMAP-Rule" id="MF_01343"/>
    </source>
</evidence>
<evidence type="ECO:0000305" key="2"/>
<gene>
    <name evidence="1" type="primary">rpsO</name>
    <name type="ordered locus">AMF_390</name>
</gene>
<reference key="1">
    <citation type="journal article" date="2009" name="BMC Genomics">
        <title>Conservation in the face of diversity: multistrain analysis of an intracellular bacterium.</title>
        <authorList>
            <person name="Dark M.J."/>
            <person name="Herndon D.R."/>
            <person name="Kappmeyer L.S."/>
            <person name="Gonzales M.P."/>
            <person name="Nordeen E."/>
            <person name="Palmer G.H."/>
            <person name="Knowles D.P. Jr."/>
            <person name="Brayton K.A."/>
        </authorList>
    </citation>
    <scope>NUCLEOTIDE SEQUENCE [LARGE SCALE GENOMIC DNA]</scope>
    <source>
        <strain>Florida</strain>
    </source>
</reference>
<sequence length="93" mass="10823">MSITPAKKSELISEYKVKDGDTGSAYVQCAILSERIRNLTEHLKVHKKDFHCRRGLMVLVCKRRKGLQYVRNKYGNDAYLDLVKRLGIRDVFH</sequence>
<proteinExistence type="inferred from homology"/>